<feature type="chain" id="PRO_0000056118" description="DNA repair protein rad5">
    <location>
        <begin position="1"/>
        <end position="1245"/>
    </location>
</feature>
<feature type="domain" description="Helicase ATP-binding" evidence="3">
    <location>
        <begin position="551"/>
        <end position="753"/>
    </location>
</feature>
<feature type="domain" description="Helicase C-terminal" evidence="4">
    <location>
        <begin position="1047"/>
        <end position="1227"/>
    </location>
</feature>
<feature type="zinc finger region" description="RING-type" evidence="2">
    <location>
        <begin position="941"/>
        <end position="986"/>
    </location>
</feature>
<feature type="region of interest" description="Disordered" evidence="5">
    <location>
        <begin position="1"/>
        <end position="85"/>
    </location>
</feature>
<feature type="region of interest" description="Disordered" evidence="5">
    <location>
        <begin position="117"/>
        <end position="145"/>
    </location>
</feature>
<feature type="region of interest" description="Disordered" evidence="5">
    <location>
        <begin position="430"/>
        <end position="454"/>
    </location>
</feature>
<feature type="region of interest" description="Disordered" evidence="5">
    <location>
        <begin position="999"/>
        <end position="1024"/>
    </location>
</feature>
<feature type="region of interest" description="Disordered" evidence="5">
    <location>
        <begin position="1110"/>
        <end position="1138"/>
    </location>
</feature>
<feature type="short sequence motif" description="DEAH box">
    <location>
        <begin position="704"/>
        <end position="707"/>
    </location>
</feature>
<feature type="compositionally biased region" description="Basic and acidic residues" evidence="5">
    <location>
        <begin position="1"/>
        <end position="10"/>
    </location>
</feature>
<feature type="compositionally biased region" description="Polar residues" evidence="5">
    <location>
        <begin position="33"/>
        <end position="44"/>
    </location>
</feature>
<feature type="compositionally biased region" description="Polar residues" evidence="5">
    <location>
        <begin position="129"/>
        <end position="145"/>
    </location>
</feature>
<feature type="compositionally biased region" description="Basic and acidic residues" evidence="5">
    <location>
        <begin position="430"/>
        <end position="441"/>
    </location>
</feature>
<feature type="compositionally biased region" description="Acidic residues" evidence="5">
    <location>
        <begin position="442"/>
        <end position="454"/>
    </location>
</feature>
<feature type="compositionally biased region" description="Polar residues" evidence="5">
    <location>
        <begin position="999"/>
        <end position="1013"/>
    </location>
</feature>
<feature type="compositionally biased region" description="Low complexity" evidence="5">
    <location>
        <begin position="1129"/>
        <end position="1138"/>
    </location>
</feature>
<feature type="binding site" evidence="3">
    <location>
        <begin position="564"/>
        <end position="571"/>
    </location>
    <ligand>
        <name>ATP</name>
        <dbReference type="ChEBI" id="CHEBI:30616"/>
    </ligand>
</feature>
<evidence type="ECO:0000250" key="1"/>
<evidence type="ECO:0000255" key="2">
    <source>
        <dbReference type="PROSITE-ProRule" id="PRU00175"/>
    </source>
</evidence>
<evidence type="ECO:0000255" key="3">
    <source>
        <dbReference type="PROSITE-ProRule" id="PRU00541"/>
    </source>
</evidence>
<evidence type="ECO:0000255" key="4">
    <source>
        <dbReference type="PROSITE-ProRule" id="PRU00542"/>
    </source>
</evidence>
<evidence type="ECO:0000256" key="5">
    <source>
        <dbReference type="SAM" id="MobiDB-lite"/>
    </source>
</evidence>
<evidence type="ECO:0000305" key="6"/>
<proteinExistence type="inferred from homology"/>
<organism>
    <name type="scientific">Aspergillus fumigatus (strain ATCC MYA-4609 / CBS 101355 / FGSC A1100 / Af293)</name>
    <name type="common">Neosartorya fumigata</name>
    <dbReference type="NCBI Taxonomy" id="330879"/>
    <lineage>
        <taxon>Eukaryota</taxon>
        <taxon>Fungi</taxon>
        <taxon>Dikarya</taxon>
        <taxon>Ascomycota</taxon>
        <taxon>Pezizomycotina</taxon>
        <taxon>Eurotiomycetes</taxon>
        <taxon>Eurotiomycetidae</taxon>
        <taxon>Eurotiales</taxon>
        <taxon>Aspergillaceae</taxon>
        <taxon>Aspergillus</taxon>
        <taxon>Aspergillus subgen. Fumigati</taxon>
    </lineage>
</organism>
<reference key="1">
    <citation type="journal article" date="2005" name="Nature">
        <title>Genomic sequence of the pathogenic and allergenic filamentous fungus Aspergillus fumigatus.</title>
        <authorList>
            <person name="Nierman W.C."/>
            <person name="Pain A."/>
            <person name="Anderson M.J."/>
            <person name="Wortman J.R."/>
            <person name="Kim H.S."/>
            <person name="Arroyo J."/>
            <person name="Berriman M."/>
            <person name="Abe K."/>
            <person name="Archer D.B."/>
            <person name="Bermejo C."/>
            <person name="Bennett J.W."/>
            <person name="Bowyer P."/>
            <person name="Chen D."/>
            <person name="Collins M."/>
            <person name="Coulsen R."/>
            <person name="Davies R."/>
            <person name="Dyer P.S."/>
            <person name="Farman M.L."/>
            <person name="Fedorova N."/>
            <person name="Fedorova N.D."/>
            <person name="Feldblyum T.V."/>
            <person name="Fischer R."/>
            <person name="Fosker N."/>
            <person name="Fraser A."/>
            <person name="Garcia J.L."/>
            <person name="Garcia M.J."/>
            <person name="Goble A."/>
            <person name="Goldman G.H."/>
            <person name="Gomi K."/>
            <person name="Griffith-Jones S."/>
            <person name="Gwilliam R."/>
            <person name="Haas B.J."/>
            <person name="Haas H."/>
            <person name="Harris D.E."/>
            <person name="Horiuchi H."/>
            <person name="Huang J."/>
            <person name="Humphray S."/>
            <person name="Jimenez J."/>
            <person name="Keller N."/>
            <person name="Khouri H."/>
            <person name="Kitamoto K."/>
            <person name="Kobayashi T."/>
            <person name="Konzack S."/>
            <person name="Kulkarni R."/>
            <person name="Kumagai T."/>
            <person name="Lafton A."/>
            <person name="Latge J.-P."/>
            <person name="Li W."/>
            <person name="Lord A."/>
            <person name="Lu C."/>
            <person name="Majoros W.H."/>
            <person name="May G.S."/>
            <person name="Miller B.L."/>
            <person name="Mohamoud Y."/>
            <person name="Molina M."/>
            <person name="Monod M."/>
            <person name="Mouyna I."/>
            <person name="Mulligan S."/>
            <person name="Murphy L.D."/>
            <person name="O'Neil S."/>
            <person name="Paulsen I."/>
            <person name="Penalva M.A."/>
            <person name="Pertea M."/>
            <person name="Price C."/>
            <person name="Pritchard B.L."/>
            <person name="Quail M.A."/>
            <person name="Rabbinowitsch E."/>
            <person name="Rawlins N."/>
            <person name="Rajandream M.A."/>
            <person name="Reichard U."/>
            <person name="Renauld H."/>
            <person name="Robson G.D."/>
            <person name="Rodriguez de Cordoba S."/>
            <person name="Rodriguez-Pena J.M."/>
            <person name="Ronning C.M."/>
            <person name="Rutter S."/>
            <person name="Salzberg S.L."/>
            <person name="Sanchez M."/>
            <person name="Sanchez-Ferrero J.C."/>
            <person name="Saunders D."/>
            <person name="Seeger K."/>
            <person name="Squares R."/>
            <person name="Squares S."/>
            <person name="Takeuchi M."/>
            <person name="Tekaia F."/>
            <person name="Turner G."/>
            <person name="Vazquez de Aldana C.R."/>
            <person name="Weidman J."/>
            <person name="White O."/>
            <person name="Woodward J.R."/>
            <person name="Yu J.-H."/>
            <person name="Fraser C.M."/>
            <person name="Galagan J.E."/>
            <person name="Asai K."/>
            <person name="Machida M."/>
            <person name="Hall N."/>
            <person name="Barrell B.G."/>
            <person name="Denning D.W."/>
        </authorList>
    </citation>
    <scope>NUCLEOTIDE SEQUENCE [LARGE SCALE GENOMIC DNA]</scope>
    <source>
        <strain>ATCC MYA-4609 / CBS 101355 / FGSC A1100 / Af293</strain>
    </source>
</reference>
<comment type="function">
    <text evidence="1">Probable helicase, member of the UBC2/RAD6 epistasis group. Functions with DNA repair protein RAD18 in error-free postreplication DNA repair. Involved in the maintenance of wild-type rates of instability of simple repetitive sequences such as poly(GT) repeats. Seems to be involved in maintaining a balance which acts in favor of error-prone non-homologous joining during DNA double-strand breaks repairs (By similarity).</text>
</comment>
<comment type="subcellular location">
    <subcellularLocation>
        <location evidence="1">Cytoplasm</location>
    </subcellularLocation>
    <subcellularLocation>
        <location evidence="1">Nucleus</location>
    </subcellularLocation>
</comment>
<comment type="similarity">
    <text evidence="6">Belongs to the SNF2/RAD54 helicase family.</text>
</comment>
<comment type="sequence caution" evidence="6">
    <conflict type="erroneous initiation">
        <sequence resource="EMBL-CDS" id="EAL91355"/>
    </conflict>
</comment>
<protein>
    <recommendedName>
        <fullName>DNA repair protein rad5</fullName>
        <ecNumber>3.6.4.-</ecNumber>
    </recommendedName>
</protein>
<accession>Q4WVM1</accession>
<dbReference type="EC" id="3.6.4.-"/>
<dbReference type="EMBL" id="AAHF01000003">
    <property type="protein sequence ID" value="EAL91355.1"/>
    <property type="status" value="ALT_INIT"/>
    <property type="molecule type" value="Genomic_DNA"/>
</dbReference>
<dbReference type="RefSeq" id="XP_753393.1">
    <property type="nucleotide sequence ID" value="XM_748300.1"/>
</dbReference>
<dbReference type="SMR" id="Q4WVM1"/>
<dbReference type="FunCoup" id="Q4WVM1">
    <property type="interactions" value="1021"/>
</dbReference>
<dbReference type="STRING" id="330879.Q4WVM1"/>
<dbReference type="GeneID" id="3511286"/>
<dbReference type="KEGG" id="afm:AFUA_5G12600"/>
<dbReference type="eggNOG" id="KOG1001">
    <property type="taxonomic scope" value="Eukaryota"/>
</dbReference>
<dbReference type="HOGENOM" id="CLU_000315_2_5_1"/>
<dbReference type="InParanoid" id="Q4WVM1"/>
<dbReference type="OrthoDB" id="2801544at2759"/>
<dbReference type="Proteomes" id="UP000002530">
    <property type="component" value="Chromosome 5"/>
</dbReference>
<dbReference type="GO" id="GO:0005737">
    <property type="term" value="C:cytoplasm"/>
    <property type="evidence" value="ECO:0007669"/>
    <property type="project" value="UniProtKB-SubCell"/>
</dbReference>
<dbReference type="GO" id="GO:0005634">
    <property type="term" value="C:nucleus"/>
    <property type="evidence" value="ECO:0000318"/>
    <property type="project" value="GO_Central"/>
</dbReference>
<dbReference type="GO" id="GO:0005524">
    <property type="term" value="F:ATP binding"/>
    <property type="evidence" value="ECO:0007669"/>
    <property type="project" value="UniProtKB-KW"/>
</dbReference>
<dbReference type="GO" id="GO:0008094">
    <property type="term" value="F:ATP-dependent activity, acting on DNA"/>
    <property type="evidence" value="ECO:0000318"/>
    <property type="project" value="GO_Central"/>
</dbReference>
<dbReference type="GO" id="GO:0003677">
    <property type="term" value="F:DNA binding"/>
    <property type="evidence" value="ECO:0007669"/>
    <property type="project" value="UniProtKB-KW"/>
</dbReference>
<dbReference type="GO" id="GO:0004386">
    <property type="term" value="F:helicase activity"/>
    <property type="evidence" value="ECO:0007669"/>
    <property type="project" value="UniProtKB-KW"/>
</dbReference>
<dbReference type="GO" id="GO:0016818">
    <property type="term" value="F:hydrolase activity, acting on acid anhydrides, in phosphorus-containing anhydrides"/>
    <property type="evidence" value="ECO:0007669"/>
    <property type="project" value="InterPro"/>
</dbReference>
<dbReference type="GO" id="GO:0008270">
    <property type="term" value="F:zinc ion binding"/>
    <property type="evidence" value="ECO:0007669"/>
    <property type="project" value="UniProtKB-KW"/>
</dbReference>
<dbReference type="GO" id="GO:0006281">
    <property type="term" value="P:DNA repair"/>
    <property type="evidence" value="ECO:0000318"/>
    <property type="project" value="GO_Central"/>
</dbReference>
<dbReference type="CDD" id="cd18008">
    <property type="entry name" value="DEXDc_SHPRH-like"/>
    <property type="match status" value="1"/>
</dbReference>
<dbReference type="CDD" id="cd18793">
    <property type="entry name" value="SF2_C_SNF"/>
    <property type="match status" value="1"/>
</dbReference>
<dbReference type="Gene3D" id="3.40.50.300">
    <property type="entry name" value="P-loop containing nucleotide triphosphate hydrolases"/>
    <property type="match status" value="2"/>
</dbReference>
<dbReference type="Gene3D" id="3.40.50.10810">
    <property type="entry name" value="Tandem AAA-ATPase domain"/>
    <property type="match status" value="1"/>
</dbReference>
<dbReference type="Gene3D" id="3.30.40.10">
    <property type="entry name" value="Zinc/RING finger domain, C3HC4 (zinc finger)"/>
    <property type="match status" value="1"/>
</dbReference>
<dbReference type="InterPro" id="IPR014001">
    <property type="entry name" value="Helicase_ATP-bd"/>
</dbReference>
<dbReference type="InterPro" id="IPR001650">
    <property type="entry name" value="Helicase_C-like"/>
</dbReference>
<dbReference type="InterPro" id="IPR014905">
    <property type="entry name" value="HIRAN"/>
</dbReference>
<dbReference type="InterPro" id="IPR027417">
    <property type="entry name" value="P-loop_NTPase"/>
</dbReference>
<dbReference type="InterPro" id="IPR038718">
    <property type="entry name" value="SNF2-like_sf"/>
</dbReference>
<dbReference type="InterPro" id="IPR049730">
    <property type="entry name" value="SNF2/RAD54-like_C"/>
</dbReference>
<dbReference type="InterPro" id="IPR000330">
    <property type="entry name" value="SNF2_N"/>
</dbReference>
<dbReference type="InterPro" id="IPR050628">
    <property type="entry name" value="SNF2_RAD54_helicase_TF"/>
</dbReference>
<dbReference type="InterPro" id="IPR001841">
    <property type="entry name" value="Znf_RING"/>
</dbReference>
<dbReference type="InterPro" id="IPR013083">
    <property type="entry name" value="Znf_RING/FYVE/PHD"/>
</dbReference>
<dbReference type="PANTHER" id="PTHR45626:SF22">
    <property type="entry name" value="DNA REPAIR PROTEIN RAD5"/>
    <property type="match status" value="1"/>
</dbReference>
<dbReference type="PANTHER" id="PTHR45626">
    <property type="entry name" value="TRANSCRIPTION TERMINATION FACTOR 2-RELATED"/>
    <property type="match status" value="1"/>
</dbReference>
<dbReference type="Pfam" id="PF00271">
    <property type="entry name" value="Helicase_C"/>
    <property type="match status" value="2"/>
</dbReference>
<dbReference type="Pfam" id="PF08797">
    <property type="entry name" value="HIRAN"/>
    <property type="match status" value="1"/>
</dbReference>
<dbReference type="Pfam" id="PF00176">
    <property type="entry name" value="SNF2-rel_dom"/>
    <property type="match status" value="1"/>
</dbReference>
<dbReference type="Pfam" id="PF24975">
    <property type="entry name" value="UBA_Rad5"/>
    <property type="match status" value="1"/>
</dbReference>
<dbReference type="SMART" id="SM00487">
    <property type="entry name" value="DEXDc"/>
    <property type="match status" value="1"/>
</dbReference>
<dbReference type="SMART" id="SM00490">
    <property type="entry name" value="HELICc"/>
    <property type="match status" value="1"/>
</dbReference>
<dbReference type="SMART" id="SM00910">
    <property type="entry name" value="HIRAN"/>
    <property type="match status" value="1"/>
</dbReference>
<dbReference type="SUPFAM" id="SSF52540">
    <property type="entry name" value="P-loop containing nucleoside triphosphate hydrolases"/>
    <property type="match status" value="2"/>
</dbReference>
<dbReference type="SUPFAM" id="SSF57850">
    <property type="entry name" value="RING/U-box"/>
    <property type="match status" value="1"/>
</dbReference>
<dbReference type="PROSITE" id="PS51192">
    <property type="entry name" value="HELICASE_ATP_BIND_1"/>
    <property type="match status" value="1"/>
</dbReference>
<dbReference type="PROSITE" id="PS51194">
    <property type="entry name" value="HELICASE_CTER"/>
    <property type="match status" value="1"/>
</dbReference>
<dbReference type="PROSITE" id="PS50089">
    <property type="entry name" value="ZF_RING_2"/>
    <property type="match status" value="1"/>
</dbReference>
<name>RAD5_ASPFU</name>
<gene>
    <name type="primary">rad5</name>
    <name type="ORF">AFUA_5G12600</name>
</gene>
<keyword id="KW-0067">ATP-binding</keyword>
<keyword id="KW-0963">Cytoplasm</keyword>
<keyword id="KW-0227">DNA damage</keyword>
<keyword id="KW-0234">DNA repair</keyword>
<keyword id="KW-0238">DNA-binding</keyword>
<keyword id="KW-0347">Helicase</keyword>
<keyword id="KW-0378">Hydrolase</keyword>
<keyword id="KW-0479">Metal-binding</keyword>
<keyword id="KW-0547">Nucleotide-binding</keyword>
<keyword id="KW-0539">Nucleus</keyword>
<keyword id="KW-1185">Reference proteome</keyword>
<keyword id="KW-0862">Zinc</keyword>
<keyword id="KW-0863">Zinc-finger</keyword>
<sequence>MVFGDLNERPLKKRRFFVDEEDTHPPSSEAAPVTTNLDTSTISSAGPEGSDVRQQQLNGAVPFPNVKESSRESPGLGPEDKQDNLLKEDEENNGTVDYEILNHSPSIHAQQDQRVDQGLTNGFGGQPSGERTVSETQAFQSSGGFDTSTFASIIGEHLSPESLEKIRKASGDDLERAVNIYFDGSWKSSNNSLSQPLVAPHQQTLSNPCTPVNESISQTVNTKISKKPNQAPSSRCLSQSSRYIGAFGVGAWATRSGVGLLKHGEHVNVERARSQPVSKRGRGGKLITNQKGDVLTRFTNKSGQEIGRLPRETAEWVSTLIDQKICRFEGICVFAPDRVRVNDTIYLQLWCYLRKEAFLPRNLWNMGDDNRSTAFFEEQESAEEKQLRLRQVALVKLFDEIGLQPTTVNDMTKKHKKEGLLRAAEIAEQYDKTKREGKSNESSEDEESPELEEDQLDTLYKKAQSFDFNMPEAQPPPSFVLNLRKYQRQALHWMLAKEKDKKSGRELSMHPLWEEYTWPTKDVDDKDLPAVEGQAHFYVNPYSGELSLDFPAQEQHCLGGILADEMGLGKTIEMLSLIHSHRNVSPSRQGPSSSTELVRMPSSSSAILPAPNTTLVVAPTSLLSQWESEAMKASEQGTMKVLMYYGVDKSTNLQELCSAGNPAAPNIIITSYGVVLSESRQLAMFNSNTQGGLFSVDFFRVILDEAHVIKNRRSKTARACYELRATHRWVLTGTPIVNRLEDLFSLVRFLQVEPWNNFSFWKTFITVPFESKDYVRALNVVQTVLEPLVLRRTKTMKTPEGEPLVPLPRRTIDIVEVELSEQEREIYDYIFTRAKRTFNDNIEAGTLLKSFSTIFAQILRLRQTCCHPILTRNKTIVADEEDAAATADAANELKDDMDLQELIDRFSASMENADTAEAQDPSAKFTTHALRQIQTESSGECPICSEEPMIDPAVTACWHSACKKCLEDYIRHQTDKGVPPRCFSCRAPVTSRDIFQVIRHQSPSSTPTETDLYSSTPASSPHPAPRISLRRIHPLSPSAHTSAKIHALINHLNRVPANTKSVVFSQFTSFLDLIGAQLTKAGISYVRLDGTMPQKARAEVLAEFNRTETFHQEEIDEDEGPDTPRVRISSKNSRSSPKSPAVLLISLRAGGVGLNLTAASNVFMMDPWWSFAIEAQAIDRVHRMGQLRDVSVTRFIVKDSIEGRMLRVQERKMNIAGSLGLRVGGDGSEDEKRKERIEELKLLFE</sequence>